<comment type="function">
    <text evidence="1 8 9 11">Inositol 4-phosphatase which mainly acts on phosphatidylinositol 4-phosphate. May be functionally linked to OCRL, which converts phosphatidylinositol 4,5-bisphosphate to phosphatidylinositol, for a sequential dephosphorylation of phosphatidylinositol 4,5-bisphosphate at the 5 and 4 position of inositol, thus playing an important role in the endocytic recycling (PubMed:25869669). Regulator of TF:TFRC and integrins recycling pathway, is also involved in cell migration mechanisms (PubMed:25869669). Modulates AKT/GSK3B pathway by decreasing AKT and GSK3B phosphorylation (PubMed:17322895). Negatively regulates STAT3 signaling pathway through inhibition of STAT3 phosphorylation and translocation to the nucleus (PubMed:25476455). Functionally important modulator of cardiac myocyte size and of the cardiac response to stress (By similarity). May play a role as negative regulator of axon regeneration after central nervous system injuries (By similarity).</text>
</comment>
<comment type="catalytic activity">
    <reaction evidence="10 11">
        <text>a myo-inositol phosphate + H2O = myo-inositol + phosphate</text>
        <dbReference type="Rhea" id="RHEA:24056"/>
        <dbReference type="ChEBI" id="CHEBI:15377"/>
        <dbReference type="ChEBI" id="CHEBI:17268"/>
        <dbReference type="ChEBI" id="CHEBI:43474"/>
        <dbReference type="ChEBI" id="CHEBI:84139"/>
        <dbReference type="EC" id="3.1.3.25"/>
    </reaction>
</comment>
<comment type="biophysicochemical properties">
    <kinetics>
        <KM evidence="6">14.3 uM for PtdIns(4,5)P2 (at pH 6.0)</KM>
    </kinetics>
</comment>
<comment type="subunit">
    <text evidence="1 9 10 11">Homodimer (PubMed:25869669). Interacts with OCRL and RAB5A (PubMed:25869668). Interacts with INPP5B and INPP4A (PubMed:25869668). Interacts with STAT3; the interaction is independent of STAT3 'Tyr-705' phosphorylation status (PubMed:25476455).</text>
</comment>
<comment type="subcellular location">
    <subcellularLocation>
        <location evidence="11">Membrane</location>
        <location evidence="11">Clathrin-coated pit</location>
    </subcellularLocation>
    <subcellularLocation>
        <location evidence="11">Early endosome</location>
    </subcellularLocation>
    <subcellularLocation>
        <location evidence="11">Recycling endosome</location>
    </subcellularLocation>
    <text evidence="1">Also found on macropinosomes.</text>
</comment>
<comment type="alternative products">
    <event type="alternative splicing"/>
    <isoform>
        <id>Q9Y2H2-1</id>
        <name>1</name>
        <sequence type="displayed"/>
    </isoform>
    <isoform>
        <id>Q9Y2H2-2</id>
        <name>2</name>
        <sequence type="described" ref="VSP_033268 VSP_033269"/>
    </isoform>
    <isoform>
        <id>Q9Y2H2-3</id>
        <name>3</name>
        <sequence type="described" ref="VSP_033266 VSP_033267"/>
    </isoform>
    <isoform>
        <id>Q9Y2H2-4</id>
        <name>4</name>
        <sequence type="described" ref="VSP_046366 VSP_046367"/>
    </isoform>
</comment>
<comment type="tissue specificity">
    <text evidence="6 12">Ubiquitous (PubMed:11274189). Highly expressed in brain (PubMed:26203138).</text>
</comment>
<comment type="caution">
    <text evidence="6">INPP5F has been initially described as an inositol polyphosphate 5-phosphatase.</text>
</comment>
<comment type="sequence caution" evidence="15">
    <conflict type="erroneous initiation">
        <sequence resource="EMBL-CDS" id="BAA76810"/>
    </conflict>
    <text>Extended N-terminus.</text>
</comment>
<proteinExistence type="evidence at protein level"/>
<sequence length="1132" mass="128407">MELFQAKDHYILQQGERALWCSRRDGGLQLRPATDLLLAWNPICLGLVEGVIGKIQLHSDLPWWLILIRQKALVGKLPGDHEVCKVTKIAVLSLSEMEPQDLELELCKKHHFGINKPEKIIPSPDDSKFLLKTFTHIKSNVSAPNKKKVKESKEKEKLERRLLEELLKMFMDSESFYYSLTYDLTNSVQRQSTGERDGRPLWQKVDDRFFWNKYMIQDLTEIGTPDVDFWIIPMIQGFVQIEELVVNYTESSDDEKSSPETPPQESTCVDDIHPRFLVALISRRSRHRAGMRYKRRGVDKNGNVANYVETEQLIHVHNHTLSFVQTRGSVPVFWSQVGYRYNPRPRLDRSEKETVAYFCAHFEEQLNIYKKQVIINLVDQAGREKIIGDAYLKQVLLFNNSHLTYVSFDFHEHCRGMKFENVQTLTDAIYDIILDMKWCWVDEAGVICKQEGIFRVNCMDCLDRTNVVQAAIARVVMEQQLKKLGVMPPEQPLPVKCNRIYQIMWANNGDSISRQYAGTAALKGDFTRTGERKLAGVMKDGVNSANRYYLNRFKDAYRQAVIDLMQGIPVTEDLYSIFTKEKEHEALHKENQRSHQELISQLLQSYMKLLLPDDEKFHGGWALIDCDPSLIDATHRDVDVLLLLSNSAYYVAYYDDEVDKVNQYQRLSLENLEKIEIGPEPTLFGKPKFSCMRLHYRYKEASGYFHTLRAVMRNPEEDGKDTLQCIAEMLQITKQAMGSDLPIIEKKLERKSSKPHEDIIGIRSQNQGSLAQGKNFLMSKFSSLNQKVKQTKSNVNIGNLRKLGNFTKPEMKVNFLKPNLKVNLWKSDSSLETMENTGVMDKVQAESDGDMSSDNDSYHSDEFLTNSKSDEDRQLANSLESVGPIDYVLPSCGIIASAPRLGSRSQSLSSTDSSVHAPSEITVAHGSGLGKGQESPLKKSPSAGDVHILTGFAKPMDIYCHRFVQDAQNKVTHLSETRSVSQQASQERNQMTNQVSNETQSESTEQTPSRPSQLDVSLSATGPQFLSVEPAHSVASQKTPTSASSMLELETGLHVTPSPSESSSSRAVSPFAKIRSSMVQVASITQAGLTHGINFAVSKVQKSPPEPEIINQVQQNELKKMFIQCQTRIIQI</sequence>
<protein>
    <recommendedName>
        <fullName evidence="15">Phosphatidylinositide phosphatase SAC2</fullName>
        <ecNumber evidence="10 11">3.1.3.25</ecNumber>
    </recommendedName>
    <alternativeName>
        <fullName evidence="18">Inositol polyphosphate 5-phosphatase F</fullName>
    </alternativeName>
    <alternativeName>
        <fullName>Sac domain-containing inositol phosphatase 2</fullName>
    </alternativeName>
    <alternativeName>
        <fullName evidence="16 17">Sac domain-containing phosphoinositide 4-phosphatase 2</fullName>
        <shortName>hSAC2</shortName>
    </alternativeName>
</protein>
<keyword id="KW-0002">3D-structure</keyword>
<keyword id="KW-0025">Alternative splicing</keyword>
<keyword id="KW-0168">Coated pit</keyword>
<keyword id="KW-0967">Endosome</keyword>
<keyword id="KW-0378">Hydrolase</keyword>
<keyword id="KW-0472">Membrane</keyword>
<keyword id="KW-0597">Phosphoprotein</keyword>
<keyword id="KW-1267">Proteomics identification</keyword>
<keyword id="KW-1185">Reference proteome</keyword>
<dbReference type="EC" id="3.1.3.25" evidence="10 11"/>
<dbReference type="EMBL" id="AB023183">
    <property type="protein sequence ID" value="BAA76810.2"/>
    <property type="status" value="ALT_INIT"/>
    <property type="molecule type" value="mRNA"/>
</dbReference>
<dbReference type="EMBL" id="AK091448">
    <property type="protein sequence ID" value="BAG52363.1"/>
    <property type="molecule type" value="mRNA"/>
</dbReference>
<dbReference type="EMBL" id="AC027672">
    <property type="status" value="NOT_ANNOTATED_CDS"/>
    <property type="molecule type" value="Genomic_DNA"/>
</dbReference>
<dbReference type="EMBL" id="AL133461">
    <property type="status" value="NOT_ANNOTATED_CDS"/>
    <property type="molecule type" value="Genomic_DNA"/>
</dbReference>
<dbReference type="EMBL" id="AL158014">
    <property type="status" value="NOT_ANNOTATED_CDS"/>
    <property type="molecule type" value="Genomic_DNA"/>
</dbReference>
<dbReference type="EMBL" id="CH471066">
    <property type="protein sequence ID" value="EAW49379.1"/>
    <property type="molecule type" value="Genomic_DNA"/>
</dbReference>
<dbReference type="EMBL" id="CH471066">
    <property type="protein sequence ID" value="EAW49380.1"/>
    <property type="molecule type" value="Genomic_DNA"/>
</dbReference>
<dbReference type="EMBL" id="CH471066">
    <property type="protein sequence ID" value="EAW49381.1"/>
    <property type="molecule type" value="Genomic_DNA"/>
</dbReference>
<dbReference type="EMBL" id="BC052367">
    <property type="protein sequence ID" value="AAH52367.1"/>
    <property type="molecule type" value="mRNA"/>
</dbReference>
<dbReference type="EMBL" id="BC067820">
    <property type="protein sequence ID" value="AAH67820.1"/>
    <property type="molecule type" value="mRNA"/>
</dbReference>
<dbReference type="EMBL" id="BC082755">
    <property type="protein sequence ID" value="AAH82755.1"/>
    <property type="molecule type" value="mRNA"/>
</dbReference>
<dbReference type="EMBL" id="BC111493">
    <property type="protein sequence ID" value="AAI11494.1"/>
    <property type="molecule type" value="mRNA"/>
</dbReference>
<dbReference type="EMBL" id="AL137528">
    <property type="protein sequence ID" value="CAB70792.1"/>
    <property type="molecule type" value="mRNA"/>
</dbReference>
<dbReference type="EMBL" id="AF113227">
    <property type="protein sequence ID" value="AAG39298.1"/>
    <property type="molecule type" value="mRNA"/>
</dbReference>
<dbReference type="EMBL" id="AF109361">
    <property type="protein sequence ID" value="AAQ13509.1"/>
    <property type="molecule type" value="mRNA"/>
</dbReference>
<dbReference type="CCDS" id="CCDS58098.1">
    <molecule id="Q9Y2H2-4"/>
</dbReference>
<dbReference type="CCDS" id="CCDS7616.1">
    <molecule id="Q9Y2H2-1"/>
</dbReference>
<dbReference type="CCDS" id="CCDS81513.1">
    <molecule id="Q9Y2H2-3"/>
</dbReference>
<dbReference type="PIR" id="T46372">
    <property type="entry name" value="T46372"/>
</dbReference>
<dbReference type="RefSeq" id="NP_001230123.1">
    <molecule id="Q9Y2H2-4"/>
    <property type="nucleotide sequence ID" value="NM_001243194.2"/>
</dbReference>
<dbReference type="RefSeq" id="NP_001230124.1">
    <molecule id="Q9Y2H2-3"/>
    <property type="nucleotide sequence ID" value="NM_001243195.2"/>
</dbReference>
<dbReference type="RefSeq" id="NP_055752.1">
    <molecule id="Q9Y2H2-1"/>
    <property type="nucleotide sequence ID" value="NM_014937.4"/>
</dbReference>
<dbReference type="PDB" id="4XUU">
    <property type="method" value="X-ray"/>
    <property type="resolution" value="2.62 A"/>
    <property type="chains" value="A/B/C/D=593-760"/>
</dbReference>
<dbReference type="PDBsum" id="4XUU"/>
<dbReference type="SMR" id="Q9Y2H2"/>
<dbReference type="BioGRID" id="116543">
    <property type="interactions" value="47"/>
</dbReference>
<dbReference type="ELM" id="Q9Y2H2"/>
<dbReference type="FunCoup" id="Q9Y2H2">
    <property type="interactions" value="2095"/>
</dbReference>
<dbReference type="IntAct" id="Q9Y2H2">
    <property type="interactions" value="11"/>
</dbReference>
<dbReference type="MINT" id="Q9Y2H2"/>
<dbReference type="STRING" id="9606.ENSP00000497527"/>
<dbReference type="DEPOD" id="INPP5F"/>
<dbReference type="GlyCosmos" id="Q9Y2H2">
    <property type="glycosylation" value="1 site, 1 glycan"/>
</dbReference>
<dbReference type="GlyGen" id="Q9Y2H2">
    <property type="glycosylation" value="2 sites, 1 N-linked glycan (1 site), 1 O-linked glycan (1 site)"/>
</dbReference>
<dbReference type="iPTMnet" id="Q9Y2H2"/>
<dbReference type="PhosphoSitePlus" id="Q9Y2H2"/>
<dbReference type="SwissPalm" id="Q9Y2H2"/>
<dbReference type="BioMuta" id="INPP5F"/>
<dbReference type="DMDM" id="187611527"/>
<dbReference type="jPOST" id="Q9Y2H2"/>
<dbReference type="MassIVE" id="Q9Y2H2"/>
<dbReference type="PaxDb" id="9606-ENSP00000354519"/>
<dbReference type="PeptideAtlas" id="Q9Y2H2"/>
<dbReference type="ProteomicsDB" id="65795"/>
<dbReference type="ProteomicsDB" id="85781">
    <molecule id="Q9Y2H2-1"/>
</dbReference>
<dbReference type="ProteomicsDB" id="85782">
    <molecule id="Q9Y2H2-2"/>
</dbReference>
<dbReference type="ProteomicsDB" id="85783">
    <molecule id="Q9Y2H2-3"/>
</dbReference>
<dbReference type="Pumba" id="Q9Y2H2"/>
<dbReference type="Antibodypedia" id="32161">
    <property type="antibodies" value="98 antibodies from 19 providers"/>
</dbReference>
<dbReference type="DNASU" id="22876"/>
<dbReference type="Ensembl" id="ENST00000369081.3">
    <molecule id="Q9Y2H2-3"/>
    <property type="protein sequence ID" value="ENSP00000489864.1"/>
    <property type="gene ID" value="ENSG00000198825.15"/>
</dbReference>
<dbReference type="Ensembl" id="ENST00000650409.1">
    <molecule id="Q9Y2H2-4"/>
    <property type="protein sequence ID" value="ENSP00000496955.1"/>
    <property type="gene ID" value="ENSG00000198825.15"/>
</dbReference>
<dbReference type="Ensembl" id="ENST00000650623.2">
    <molecule id="Q9Y2H2-1"/>
    <property type="protein sequence ID" value="ENSP00000497527.1"/>
    <property type="gene ID" value="ENSG00000198825.15"/>
</dbReference>
<dbReference type="GeneID" id="22876"/>
<dbReference type="KEGG" id="hsa:22876"/>
<dbReference type="MANE-Select" id="ENST00000650623.2">
    <property type="protein sequence ID" value="ENSP00000497527.1"/>
    <property type="RefSeq nucleotide sequence ID" value="NM_014937.4"/>
    <property type="RefSeq protein sequence ID" value="NP_055752.1"/>
</dbReference>
<dbReference type="UCSC" id="uc001leo.4">
    <molecule id="Q9Y2H2-1"/>
    <property type="organism name" value="human"/>
</dbReference>
<dbReference type="AGR" id="HGNC:17054"/>
<dbReference type="CTD" id="22876"/>
<dbReference type="DisGeNET" id="22876"/>
<dbReference type="GeneCards" id="INPP5F"/>
<dbReference type="HGNC" id="HGNC:17054">
    <property type="gene designation" value="INPP5F"/>
</dbReference>
<dbReference type="HPA" id="ENSG00000198825">
    <property type="expression patterns" value="Tissue enhanced (brain)"/>
</dbReference>
<dbReference type="MIM" id="609389">
    <property type="type" value="gene"/>
</dbReference>
<dbReference type="neXtProt" id="NX_Q9Y2H2"/>
<dbReference type="OpenTargets" id="ENSG00000198825"/>
<dbReference type="PharmGKB" id="PA134927878"/>
<dbReference type="VEuPathDB" id="HostDB:ENSG00000198825"/>
<dbReference type="eggNOG" id="KOG1890">
    <property type="taxonomic scope" value="Eukaryota"/>
</dbReference>
<dbReference type="GeneTree" id="ENSGT00940000155996"/>
<dbReference type="HOGENOM" id="CLU_008079_0_0_1"/>
<dbReference type="InParanoid" id="Q9Y2H2"/>
<dbReference type="OMA" id="ALHKESQ"/>
<dbReference type="OrthoDB" id="405996at2759"/>
<dbReference type="PAN-GO" id="Q9Y2H2">
    <property type="GO annotations" value="5 GO annotations based on evolutionary models"/>
</dbReference>
<dbReference type="PhylomeDB" id="Q9Y2H2"/>
<dbReference type="TreeFam" id="TF313543"/>
<dbReference type="BioCyc" id="MetaCyc:HS12255-MONOMER"/>
<dbReference type="PathwayCommons" id="Q9Y2H2"/>
<dbReference type="Reactome" id="R-HSA-1660516">
    <property type="pathway name" value="Synthesis of PIPs at the early endosome membrane"/>
</dbReference>
<dbReference type="SABIO-RK" id="Q9Y2H2"/>
<dbReference type="SignaLink" id="Q9Y2H2"/>
<dbReference type="BioGRID-ORCS" id="22876">
    <property type="hits" value="19 hits in 1164 CRISPR screens"/>
</dbReference>
<dbReference type="ChiTaRS" id="INPP5F">
    <property type="organism name" value="human"/>
</dbReference>
<dbReference type="EvolutionaryTrace" id="Q9Y2H2"/>
<dbReference type="GenomeRNAi" id="22876"/>
<dbReference type="Pharos" id="Q9Y2H2">
    <property type="development level" value="Tbio"/>
</dbReference>
<dbReference type="PRO" id="PR:Q9Y2H2"/>
<dbReference type="Proteomes" id="UP000005640">
    <property type="component" value="Chromosome 10"/>
</dbReference>
<dbReference type="RNAct" id="Q9Y2H2">
    <property type="molecule type" value="protein"/>
</dbReference>
<dbReference type="Bgee" id="ENSG00000198825">
    <property type="expression patterns" value="Expressed in pons and 202 other cell types or tissues"/>
</dbReference>
<dbReference type="ExpressionAtlas" id="Q9Y2H2">
    <property type="expression patterns" value="baseline and differential"/>
</dbReference>
<dbReference type="GO" id="GO:0030424">
    <property type="term" value="C:axon"/>
    <property type="evidence" value="ECO:0007669"/>
    <property type="project" value="Ensembl"/>
</dbReference>
<dbReference type="GO" id="GO:0045334">
    <property type="term" value="C:clathrin-coated endocytic vesicle"/>
    <property type="evidence" value="ECO:0000314"/>
    <property type="project" value="UniProtKB"/>
</dbReference>
<dbReference type="GO" id="GO:0005905">
    <property type="term" value="C:clathrin-coated pit"/>
    <property type="evidence" value="ECO:0007669"/>
    <property type="project" value="UniProtKB-SubCell"/>
</dbReference>
<dbReference type="GO" id="GO:0030425">
    <property type="term" value="C:dendrite"/>
    <property type="evidence" value="ECO:0007669"/>
    <property type="project" value="Ensembl"/>
</dbReference>
<dbReference type="GO" id="GO:0005769">
    <property type="term" value="C:early endosome"/>
    <property type="evidence" value="ECO:0000314"/>
    <property type="project" value="UniProtKB"/>
</dbReference>
<dbReference type="GO" id="GO:0031901">
    <property type="term" value="C:early endosome membrane"/>
    <property type="evidence" value="ECO:0000304"/>
    <property type="project" value="Reactome"/>
</dbReference>
<dbReference type="GO" id="GO:0043231">
    <property type="term" value="C:intracellular membrane-bounded organelle"/>
    <property type="evidence" value="ECO:0000314"/>
    <property type="project" value="HPA"/>
</dbReference>
<dbReference type="GO" id="GO:0043025">
    <property type="term" value="C:neuronal cell body"/>
    <property type="evidence" value="ECO:0007669"/>
    <property type="project" value="Ensembl"/>
</dbReference>
<dbReference type="GO" id="GO:0055037">
    <property type="term" value="C:recycling endosome"/>
    <property type="evidence" value="ECO:0000314"/>
    <property type="project" value="UniProtKB"/>
</dbReference>
<dbReference type="GO" id="GO:0052833">
    <property type="term" value="F:inositol monophosphate 4-phosphatase activity"/>
    <property type="evidence" value="ECO:0007669"/>
    <property type="project" value="Ensembl"/>
</dbReference>
<dbReference type="GO" id="GO:0034596">
    <property type="term" value="F:phosphatidylinositol phosphate 4-phosphatase activity"/>
    <property type="evidence" value="ECO:0000314"/>
    <property type="project" value="ParkinsonsUK-UCL"/>
</dbReference>
<dbReference type="GO" id="GO:0034595">
    <property type="term" value="F:phosphatidylinositol phosphate 5-phosphatase activity"/>
    <property type="evidence" value="ECO:0000314"/>
    <property type="project" value="ParkinsonsUK-UCL"/>
</dbReference>
<dbReference type="GO" id="GO:0043812">
    <property type="term" value="F:phosphatidylinositol-4-phosphate phosphatase activity"/>
    <property type="evidence" value="ECO:0000318"/>
    <property type="project" value="GO_Central"/>
</dbReference>
<dbReference type="GO" id="GO:0042803">
    <property type="term" value="F:protein homodimerization activity"/>
    <property type="evidence" value="ECO:0000314"/>
    <property type="project" value="UniProtKB"/>
</dbReference>
<dbReference type="GO" id="GO:0008344">
    <property type="term" value="P:adult locomotory behavior"/>
    <property type="evidence" value="ECO:0007669"/>
    <property type="project" value="Ensembl"/>
</dbReference>
<dbReference type="GO" id="GO:0014898">
    <property type="term" value="P:cardiac muscle hypertrophy in response to stress"/>
    <property type="evidence" value="ECO:0000250"/>
    <property type="project" value="UniProtKB"/>
</dbReference>
<dbReference type="GO" id="GO:0072583">
    <property type="term" value="P:clathrin-dependent endocytosis"/>
    <property type="evidence" value="ECO:0000250"/>
    <property type="project" value="UniProtKB"/>
</dbReference>
<dbReference type="GO" id="GO:0048681">
    <property type="term" value="P:negative regulation of axon regeneration"/>
    <property type="evidence" value="ECO:0000250"/>
    <property type="project" value="BHF-UCL"/>
</dbReference>
<dbReference type="GO" id="GO:0042532">
    <property type="term" value="P:negative regulation of tyrosine phosphorylation of STAT protein"/>
    <property type="evidence" value="ECO:0000314"/>
    <property type="project" value="UniProtKB"/>
</dbReference>
<dbReference type="GO" id="GO:0043491">
    <property type="term" value="P:phosphatidylinositol 3-kinase/protein kinase B signal transduction"/>
    <property type="evidence" value="ECO:0007669"/>
    <property type="project" value="Ensembl"/>
</dbReference>
<dbReference type="GO" id="GO:0006661">
    <property type="term" value="P:phosphatidylinositol biosynthetic process"/>
    <property type="evidence" value="ECO:0000304"/>
    <property type="project" value="Reactome"/>
</dbReference>
<dbReference type="GO" id="GO:0031161">
    <property type="term" value="P:phosphatidylinositol catabolic process"/>
    <property type="evidence" value="ECO:0000250"/>
    <property type="project" value="UniProtKB"/>
</dbReference>
<dbReference type="GO" id="GO:0046856">
    <property type="term" value="P:phosphatidylinositol dephosphorylation"/>
    <property type="evidence" value="ECO:0000314"/>
    <property type="project" value="ParkinsonsUK-UCL"/>
</dbReference>
<dbReference type="GO" id="GO:0048015">
    <property type="term" value="P:phosphatidylinositol-mediated signaling"/>
    <property type="evidence" value="ECO:0000250"/>
    <property type="project" value="UniProtKB"/>
</dbReference>
<dbReference type="GO" id="GO:0001921">
    <property type="term" value="P:positive regulation of receptor recycling"/>
    <property type="evidence" value="ECO:0000314"/>
    <property type="project" value="ParkinsonsUK-UCL"/>
</dbReference>
<dbReference type="GO" id="GO:2000145">
    <property type="term" value="P:regulation of cell motility"/>
    <property type="evidence" value="ECO:0000315"/>
    <property type="project" value="UniProtKB"/>
</dbReference>
<dbReference type="GO" id="GO:2001135">
    <property type="term" value="P:regulation of endocytic recycling"/>
    <property type="evidence" value="ECO:0000315"/>
    <property type="project" value="UniProtKB"/>
</dbReference>
<dbReference type="InterPro" id="IPR034753">
    <property type="entry name" value="hSac2"/>
</dbReference>
<dbReference type="InterPro" id="IPR022158">
    <property type="entry name" value="Inositol_phosphatase"/>
</dbReference>
<dbReference type="InterPro" id="IPR002013">
    <property type="entry name" value="SAC_dom"/>
</dbReference>
<dbReference type="PANTHER" id="PTHR45662">
    <property type="entry name" value="PHOSPHATIDYLINOSITIDE PHOSPHATASE SAC1"/>
    <property type="match status" value="1"/>
</dbReference>
<dbReference type="PANTHER" id="PTHR45662:SF8">
    <property type="entry name" value="PHOSPHATIDYLINOSITIDE PHOSPHATASE SAC2"/>
    <property type="match status" value="1"/>
</dbReference>
<dbReference type="Pfam" id="PF12456">
    <property type="entry name" value="hSac2"/>
    <property type="match status" value="1"/>
</dbReference>
<dbReference type="Pfam" id="PF02383">
    <property type="entry name" value="Syja_N"/>
    <property type="match status" value="1"/>
</dbReference>
<dbReference type="PROSITE" id="PS51791">
    <property type="entry name" value="HSAC2"/>
    <property type="match status" value="1"/>
</dbReference>
<dbReference type="PROSITE" id="PS50275">
    <property type="entry name" value="SAC"/>
    <property type="match status" value="1"/>
</dbReference>
<gene>
    <name evidence="18" type="primary">INPP5F</name>
    <name type="synonym">KIAA0966</name>
    <name type="synonym">SAC2</name>
    <name type="ORF">MSTP007</name>
    <name type="ORF">MSTP047</name>
</gene>
<reference key="1">
    <citation type="journal article" date="2001" name="J. Biol. Chem.">
        <title>Identification and characterization of a sac domain-containing phosphoinositide 5-phosphatase.</title>
        <authorList>
            <person name="Minagawa T."/>
            <person name="Ijuin T."/>
            <person name="Mochizuki Y."/>
            <person name="Takenawa T."/>
        </authorList>
    </citation>
    <scope>NUCLEOTIDE SEQUENCE [MRNA] (ISOFORM 1)</scope>
    <scope>ENZYME ACTIVITY</scope>
    <scope>BIOPHYSICOCHEMICAL PROPERTIES</scope>
    <scope>TISSUE SPECIFICITY</scope>
    <scope>CAUTION</scope>
</reference>
<reference key="2">
    <citation type="journal article" date="1999" name="DNA Res.">
        <title>Prediction of the coding sequences of unidentified human genes. XIII. The complete sequences of 100 new cDNA clones from brain which code for large proteins in vitro.</title>
        <authorList>
            <person name="Nagase T."/>
            <person name="Ishikawa K."/>
            <person name="Suyama M."/>
            <person name="Kikuno R."/>
            <person name="Hirosawa M."/>
            <person name="Miyajima N."/>
            <person name="Tanaka A."/>
            <person name="Kotani H."/>
            <person name="Nomura N."/>
            <person name="Ohara O."/>
        </authorList>
    </citation>
    <scope>NUCLEOTIDE SEQUENCE [LARGE SCALE MRNA] (ISOFORM 1)</scope>
    <scope>VARIANT ASP-997</scope>
    <source>
        <tissue>Brain</tissue>
    </source>
</reference>
<reference key="3">
    <citation type="journal article" date="2004" name="Nat. Genet.">
        <title>Complete sequencing and characterization of 21,243 full-length human cDNAs.</title>
        <authorList>
            <person name="Ota T."/>
            <person name="Suzuki Y."/>
            <person name="Nishikawa T."/>
            <person name="Otsuki T."/>
            <person name="Sugiyama T."/>
            <person name="Irie R."/>
            <person name="Wakamatsu A."/>
            <person name="Hayashi K."/>
            <person name="Sato H."/>
            <person name="Nagai K."/>
            <person name="Kimura K."/>
            <person name="Makita H."/>
            <person name="Sekine M."/>
            <person name="Obayashi M."/>
            <person name="Nishi T."/>
            <person name="Shibahara T."/>
            <person name="Tanaka T."/>
            <person name="Ishii S."/>
            <person name="Yamamoto J."/>
            <person name="Saito K."/>
            <person name="Kawai Y."/>
            <person name="Isono Y."/>
            <person name="Nakamura Y."/>
            <person name="Nagahari K."/>
            <person name="Murakami K."/>
            <person name="Yasuda T."/>
            <person name="Iwayanagi T."/>
            <person name="Wagatsuma M."/>
            <person name="Shiratori A."/>
            <person name="Sudo H."/>
            <person name="Hosoiri T."/>
            <person name="Kaku Y."/>
            <person name="Kodaira H."/>
            <person name="Kondo H."/>
            <person name="Sugawara M."/>
            <person name="Takahashi M."/>
            <person name="Kanda K."/>
            <person name="Yokoi T."/>
            <person name="Furuya T."/>
            <person name="Kikkawa E."/>
            <person name="Omura Y."/>
            <person name="Abe K."/>
            <person name="Kamihara K."/>
            <person name="Katsuta N."/>
            <person name="Sato K."/>
            <person name="Tanikawa M."/>
            <person name="Yamazaki M."/>
            <person name="Ninomiya K."/>
            <person name="Ishibashi T."/>
            <person name="Yamashita H."/>
            <person name="Murakawa K."/>
            <person name="Fujimori K."/>
            <person name="Tanai H."/>
            <person name="Kimata M."/>
            <person name="Watanabe M."/>
            <person name="Hiraoka S."/>
            <person name="Chiba Y."/>
            <person name="Ishida S."/>
            <person name="Ono Y."/>
            <person name="Takiguchi S."/>
            <person name="Watanabe S."/>
            <person name="Yosida M."/>
            <person name="Hotuta T."/>
            <person name="Kusano J."/>
            <person name="Kanehori K."/>
            <person name="Takahashi-Fujii A."/>
            <person name="Hara H."/>
            <person name="Tanase T.-O."/>
            <person name="Nomura Y."/>
            <person name="Togiya S."/>
            <person name="Komai F."/>
            <person name="Hara R."/>
            <person name="Takeuchi K."/>
            <person name="Arita M."/>
            <person name="Imose N."/>
            <person name="Musashino K."/>
            <person name="Yuuki H."/>
            <person name="Oshima A."/>
            <person name="Sasaki N."/>
            <person name="Aotsuka S."/>
            <person name="Yoshikawa Y."/>
            <person name="Matsunawa H."/>
            <person name="Ichihara T."/>
            <person name="Shiohata N."/>
            <person name="Sano S."/>
            <person name="Moriya S."/>
            <person name="Momiyama H."/>
            <person name="Satoh N."/>
            <person name="Takami S."/>
            <person name="Terashima Y."/>
            <person name="Suzuki O."/>
            <person name="Nakagawa S."/>
            <person name="Senoh A."/>
            <person name="Mizoguchi H."/>
            <person name="Goto Y."/>
            <person name="Shimizu F."/>
            <person name="Wakebe H."/>
            <person name="Hishigaki H."/>
            <person name="Watanabe T."/>
            <person name="Sugiyama A."/>
            <person name="Takemoto M."/>
            <person name="Kawakami B."/>
            <person name="Yamazaki M."/>
            <person name="Watanabe K."/>
            <person name="Kumagai A."/>
            <person name="Itakura S."/>
            <person name="Fukuzumi Y."/>
            <person name="Fujimori Y."/>
            <person name="Komiyama M."/>
            <person name="Tashiro H."/>
            <person name="Tanigami A."/>
            <person name="Fujiwara T."/>
            <person name="Ono T."/>
            <person name="Yamada K."/>
            <person name="Fujii Y."/>
            <person name="Ozaki K."/>
            <person name="Hirao M."/>
            <person name="Ohmori Y."/>
            <person name="Kawabata A."/>
            <person name="Hikiji T."/>
            <person name="Kobatake N."/>
            <person name="Inagaki H."/>
            <person name="Ikema Y."/>
            <person name="Okamoto S."/>
            <person name="Okitani R."/>
            <person name="Kawakami T."/>
            <person name="Noguchi S."/>
            <person name="Itoh T."/>
            <person name="Shigeta K."/>
            <person name="Senba T."/>
            <person name="Matsumura K."/>
            <person name="Nakajima Y."/>
            <person name="Mizuno T."/>
            <person name="Morinaga M."/>
            <person name="Sasaki M."/>
            <person name="Togashi T."/>
            <person name="Oyama M."/>
            <person name="Hata H."/>
            <person name="Watanabe M."/>
            <person name="Komatsu T."/>
            <person name="Mizushima-Sugano J."/>
            <person name="Satoh T."/>
            <person name="Shirai Y."/>
            <person name="Takahashi Y."/>
            <person name="Nakagawa K."/>
            <person name="Okumura K."/>
            <person name="Nagase T."/>
            <person name="Nomura N."/>
            <person name="Kikuchi H."/>
            <person name="Masuho Y."/>
            <person name="Yamashita R."/>
            <person name="Nakai K."/>
            <person name="Yada T."/>
            <person name="Nakamura Y."/>
            <person name="Ohara O."/>
            <person name="Isogai T."/>
            <person name="Sugano S."/>
        </authorList>
    </citation>
    <scope>NUCLEOTIDE SEQUENCE [LARGE SCALE MRNA] (ISOFORM 4)</scope>
    <source>
        <tissue>Brain</tissue>
    </source>
</reference>
<reference key="4">
    <citation type="journal article" date="2004" name="Nature">
        <title>The DNA sequence and comparative analysis of human chromosome 10.</title>
        <authorList>
            <person name="Deloukas P."/>
            <person name="Earthrowl M.E."/>
            <person name="Grafham D.V."/>
            <person name="Rubenfield M."/>
            <person name="French L."/>
            <person name="Steward C.A."/>
            <person name="Sims S.K."/>
            <person name="Jones M.C."/>
            <person name="Searle S."/>
            <person name="Scott C."/>
            <person name="Howe K."/>
            <person name="Hunt S.E."/>
            <person name="Andrews T.D."/>
            <person name="Gilbert J.G.R."/>
            <person name="Swarbreck D."/>
            <person name="Ashurst J.L."/>
            <person name="Taylor A."/>
            <person name="Battles J."/>
            <person name="Bird C.P."/>
            <person name="Ainscough R."/>
            <person name="Almeida J.P."/>
            <person name="Ashwell R.I.S."/>
            <person name="Ambrose K.D."/>
            <person name="Babbage A.K."/>
            <person name="Bagguley C.L."/>
            <person name="Bailey J."/>
            <person name="Banerjee R."/>
            <person name="Bates K."/>
            <person name="Beasley H."/>
            <person name="Bray-Allen S."/>
            <person name="Brown A.J."/>
            <person name="Brown J.Y."/>
            <person name="Burford D.C."/>
            <person name="Burrill W."/>
            <person name="Burton J."/>
            <person name="Cahill P."/>
            <person name="Camire D."/>
            <person name="Carter N.P."/>
            <person name="Chapman J.C."/>
            <person name="Clark S.Y."/>
            <person name="Clarke G."/>
            <person name="Clee C.M."/>
            <person name="Clegg S."/>
            <person name="Corby N."/>
            <person name="Coulson A."/>
            <person name="Dhami P."/>
            <person name="Dutta I."/>
            <person name="Dunn M."/>
            <person name="Faulkner L."/>
            <person name="Frankish A."/>
            <person name="Frankland J.A."/>
            <person name="Garner P."/>
            <person name="Garnett J."/>
            <person name="Gribble S."/>
            <person name="Griffiths C."/>
            <person name="Grocock R."/>
            <person name="Gustafson E."/>
            <person name="Hammond S."/>
            <person name="Harley J.L."/>
            <person name="Hart E."/>
            <person name="Heath P.D."/>
            <person name="Ho T.P."/>
            <person name="Hopkins B."/>
            <person name="Horne J."/>
            <person name="Howden P.J."/>
            <person name="Huckle E."/>
            <person name="Hynds C."/>
            <person name="Johnson C."/>
            <person name="Johnson D."/>
            <person name="Kana A."/>
            <person name="Kay M."/>
            <person name="Kimberley A.M."/>
            <person name="Kershaw J.K."/>
            <person name="Kokkinaki M."/>
            <person name="Laird G.K."/>
            <person name="Lawlor S."/>
            <person name="Lee H.M."/>
            <person name="Leongamornlert D.A."/>
            <person name="Laird G."/>
            <person name="Lloyd C."/>
            <person name="Lloyd D.M."/>
            <person name="Loveland J."/>
            <person name="Lovell J."/>
            <person name="McLaren S."/>
            <person name="McLay K.E."/>
            <person name="McMurray A."/>
            <person name="Mashreghi-Mohammadi M."/>
            <person name="Matthews L."/>
            <person name="Milne S."/>
            <person name="Nickerson T."/>
            <person name="Nguyen M."/>
            <person name="Overton-Larty E."/>
            <person name="Palmer S.A."/>
            <person name="Pearce A.V."/>
            <person name="Peck A.I."/>
            <person name="Pelan S."/>
            <person name="Phillimore B."/>
            <person name="Porter K."/>
            <person name="Rice C.M."/>
            <person name="Rogosin A."/>
            <person name="Ross M.T."/>
            <person name="Sarafidou T."/>
            <person name="Sehra H.K."/>
            <person name="Shownkeen R."/>
            <person name="Skuce C.D."/>
            <person name="Smith M."/>
            <person name="Standring L."/>
            <person name="Sycamore N."/>
            <person name="Tester J."/>
            <person name="Thorpe A."/>
            <person name="Torcasso W."/>
            <person name="Tracey A."/>
            <person name="Tromans A."/>
            <person name="Tsolas J."/>
            <person name="Wall M."/>
            <person name="Walsh J."/>
            <person name="Wang H."/>
            <person name="Weinstock K."/>
            <person name="West A.P."/>
            <person name="Willey D.L."/>
            <person name="Whitehead S.L."/>
            <person name="Wilming L."/>
            <person name="Wray P.W."/>
            <person name="Young L."/>
            <person name="Chen Y."/>
            <person name="Lovering R.C."/>
            <person name="Moschonas N.K."/>
            <person name="Siebert R."/>
            <person name="Fechtel K."/>
            <person name="Bentley D."/>
            <person name="Durbin R.M."/>
            <person name="Hubbard T."/>
            <person name="Doucette-Stamm L."/>
            <person name="Beck S."/>
            <person name="Smith D.R."/>
            <person name="Rogers J."/>
        </authorList>
    </citation>
    <scope>NUCLEOTIDE SEQUENCE [LARGE SCALE GENOMIC DNA]</scope>
</reference>
<reference key="5">
    <citation type="submission" date="2005-09" db="EMBL/GenBank/DDBJ databases">
        <authorList>
            <person name="Mural R.J."/>
            <person name="Istrail S."/>
            <person name="Sutton G.G."/>
            <person name="Florea L."/>
            <person name="Halpern A.L."/>
            <person name="Mobarry C.M."/>
            <person name="Lippert R."/>
            <person name="Walenz B."/>
            <person name="Shatkay H."/>
            <person name="Dew I."/>
            <person name="Miller J.R."/>
            <person name="Flanigan M.J."/>
            <person name="Edwards N.J."/>
            <person name="Bolanos R."/>
            <person name="Fasulo D."/>
            <person name="Halldorsson B.V."/>
            <person name="Hannenhalli S."/>
            <person name="Turner R."/>
            <person name="Yooseph S."/>
            <person name="Lu F."/>
            <person name="Nusskern D.R."/>
            <person name="Shue B.C."/>
            <person name="Zheng X.H."/>
            <person name="Zhong F."/>
            <person name="Delcher A.L."/>
            <person name="Huson D.H."/>
            <person name="Kravitz S.A."/>
            <person name="Mouchard L."/>
            <person name="Reinert K."/>
            <person name="Remington K.A."/>
            <person name="Clark A.G."/>
            <person name="Waterman M.S."/>
            <person name="Eichler E.E."/>
            <person name="Adams M.D."/>
            <person name="Hunkapiller M.W."/>
            <person name="Myers E.W."/>
            <person name="Venter J.C."/>
        </authorList>
    </citation>
    <scope>NUCLEOTIDE SEQUENCE [LARGE SCALE GENOMIC DNA]</scope>
</reference>
<reference key="6">
    <citation type="journal article" date="2004" name="Genome Res.">
        <title>The status, quality, and expansion of the NIH full-length cDNA project: the Mammalian Gene Collection (MGC).</title>
        <authorList>
            <consortium name="The MGC Project Team"/>
        </authorList>
    </citation>
    <scope>NUCLEOTIDE SEQUENCE [LARGE SCALE MRNA] (ISOFORMS 1; 2 AND 3)</scope>
    <scope>VARIANT ASP-997</scope>
    <source>
        <tissue>Placenta</tissue>
        <tissue>Skin</tissue>
    </source>
</reference>
<reference key="7">
    <citation type="journal article" date="2007" name="BMC Genomics">
        <title>The full-ORF clone resource of the German cDNA consortium.</title>
        <authorList>
            <person name="Bechtel S."/>
            <person name="Rosenfelder H."/>
            <person name="Duda A."/>
            <person name="Schmidt C.P."/>
            <person name="Ernst U."/>
            <person name="Wellenreuther R."/>
            <person name="Mehrle A."/>
            <person name="Schuster C."/>
            <person name="Bahr A."/>
            <person name="Bloecker H."/>
            <person name="Heubner D."/>
            <person name="Hoerlein A."/>
            <person name="Michel G."/>
            <person name="Wedler H."/>
            <person name="Koehrer K."/>
            <person name="Ottenwaelder B."/>
            <person name="Poustka A."/>
            <person name="Wiemann S."/>
            <person name="Schupp I."/>
        </authorList>
    </citation>
    <scope>NUCLEOTIDE SEQUENCE [LARGE SCALE MRNA] OF 274-1132 (ISOFORM 1)</scope>
    <source>
        <tissue>Testis</tissue>
    </source>
</reference>
<reference key="8">
    <citation type="submission" date="1998-12" db="EMBL/GenBank/DDBJ databases">
        <authorList>
            <person name="Liu B."/>
            <person name="Liu Y.Q."/>
            <person name="Wang X.Y."/>
            <person name="Zhao B."/>
            <person name="Sheng H."/>
            <person name="Zhao X.W."/>
            <person name="Liu S."/>
            <person name="Xu Y.Y."/>
            <person name="Ye J."/>
            <person name="Song L."/>
            <person name="Gao Y."/>
            <person name="Zhang C.L."/>
            <person name="Zhang J."/>
            <person name="Wei Y.J."/>
            <person name="Cao H.Q."/>
            <person name="Zhao Y."/>
            <person name="Liu L.S."/>
            <person name="Ding J.F."/>
            <person name="Gao R.L."/>
            <person name="Wu Q.Y."/>
            <person name="Qiang B.Q."/>
            <person name="Yuan J.G."/>
            <person name="Liew C.C."/>
            <person name="Zhao M.S."/>
            <person name="Hui R.T."/>
        </authorList>
    </citation>
    <scope>NUCLEOTIDE SEQUENCE [LARGE SCALE MRNA] OF 956-1132 (ISOFORM 1)</scope>
    <source>
        <tissue>Aorta</tissue>
    </source>
</reference>
<reference key="9">
    <citation type="journal article" date="2007" name="Nat. Med.">
        <title>Hdac2 regulates the cardiac hypertrophic response by modulating Gsk3 beta activity.</title>
        <authorList>
            <person name="Trivedi C.M."/>
            <person name="Luo Y."/>
            <person name="Yin Z."/>
            <person name="Zhang M."/>
            <person name="Zhu W."/>
            <person name="Wang T."/>
            <person name="Floss T."/>
            <person name="Goettlicher M."/>
            <person name="Noppinger P.R."/>
            <person name="Wurst W."/>
            <person name="Ferrari V.A."/>
            <person name="Abrams C.S."/>
            <person name="Gruber P.J."/>
            <person name="Epstein J.A."/>
        </authorList>
    </citation>
    <scope>FUNCTION</scope>
</reference>
<reference key="10">
    <citation type="journal article" date="2008" name="Proc. Natl. Acad. Sci. U.S.A.">
        <title>A quantitative atlas of mitotic phosphorylation.</title>
        <authorList>
            <person name="Dephoure N."/>
            <person name="Zhou C."/>
            <person name="Villen J."/>
            <person name="Beausoleil S.A."/>
            <person name="Bakalarski C.E."/>
            <person name="Elledge S.J."/>
            <person name="Gygi S.P."/>
        </authorList>
    </citation>
    <scope>IDENTIFICATION BY MASS SPECTROMETRY [LARGE SCALE ANALYSIS]</scope>
    <source>
        <tissue>Cervix carcinoma</tissue>
    </source>
</reference>
<reference key="11">
    <citation type="journal article" date="2009" name="Sci. Signal.">
        <title>Quantitative phosphoproteomic analysis of T cell receptor signaling reveals system-wide modulation of protein-protein interactions.</title>
        <authorList>
            <person name="Mayya V."/>
            <person name="Lundgren D.H."/>
            <person name="Hwang S.-I."/>
            <person name="Rezaul K."/>
            <person name="Wu L."/>
            <person name="Eng J.K."/>
            <person name="Rodionov V."/>
            <person name="Han D.K."/>
        </authorList>
    </citation>
    <scope>IDENTIFICATION BY MASS SPECTROMETRY [LARGE SCALE ANALYSIS]</scope>
    <source>
        <tissue>Leukemic T-cell</tissue>
    </source>
</reference>
<reference key="12">
    <citation type="journal article" date="2011" name="Sci. Signal.">
        <title>System-wide temporal characterization of the proteome and phosphoproteome of human embryonic stem cell differentiation.</title>
        <authorList>
            <person name="Rigbolt K.T."/>
            <person name="Prokhorova T.A."/>
            <person name="Akimov V."/>
            <person name="Henningsen J."/>
            <person name="Johansen P.T."/>
            <person name="Kratchmarova I."/>
            <person name="Kassem M."/>
            <person name="Mann M."/>
            <person name="Olsen J.V."/>
            <person name="Blagoev B."/>
        </authorList>
    </citation>
    <scope>IDENTIFICATION BY MASS SPECTROMETRY [LARGE SCALE ANALYSIS]</scope>
</reference>
<reference key="13">
    <citation type="journal article" date="2013" name="J. Proteome Res.">
        <title>Toward a comprehensive characterization of a human cancer cell phosphoproteome.</title>
        <authorList>
            <person name="Zhou H."/>
            <person name="Di Palma S."/>
            <person name="Preisinger C."/>
            <person name="Peng M."/>
            <person name="Polat A.N."/>
            <person name="Heck A.J."/>
            <person name="Mohammed S."/>
        </authorList>
    </citation>
    <scope>PHOSPHORYLATION [LARGE SCALE ANALYSIS] AT SER-907 AND SER-1103</scope>
    <scope>IDENTIFICATION BY MASS SPECTROMETRY [LARGE SCALE ANALYSIS]</scope>
    <source>
        <tissue>Erythroleukemia</tissue>
    </source>
</reference>
<reference key="14">
    <citation type="journal article" date="2014" name="J. Proteomics">
        <title>An enzyme assisted RP-RPLC approach for in-depth analysis of human liver phosphoproteome.</title>
        <authorList>
            <person name="Bian Y."/>
            <person name="Song C."/>
            <person name="Cheng K."/>
            <person name="Dong M."/>
            <person name="Wang F."/>
            <person name="Huang J."/>
            <person name="Sun D."/>
            <person name="Wang L."/>
            <person name="Ye M."/>
            <person name="Zou H."/>
        </authorList>
    </citation>
    <scope>IDENTIFICATION BY MASS SPECTROMETRY [LARGE SCALE ANALYSIS]</scope>
    <source>
        <tissue>Liver</tissue>
    </source>
</reference>
<reference key="15">
    <citation type="journal article" date="2014" name="Sci. Rep.">
        <title>Inositol Polyphosphate-5-Phosphatase F (INPP5F) inhibits STAT3 activity and suppresses gliomas tumorigenicity.</title>
        <authorList>
            <person name="Kim H.S."/>
            <person name="Li A."/>
            <person name="Ahn S."/>
            <person name="Song H."/>
            <person name="Zhang W."/>
        </authorList>
    </citation>
    <scope>FUNCTION</scope>
    <scope>INTERACTION WITH STAT3</scope>
</reference>
<reference key="16">
    <citation type="journal article" date="2015" name="J. Cell Biol.">
        <title>Sac2/INPP5F is an inositol 4-phosphatase that functions in the endocytic pathway.</title>
        <authorList>
            <person name="Nakatsu F."/>
            <person name="Messa M."/>
            <person name="Nandez R."/>
            <person name="Czapla H."/>
            <person name="Zou Y."/>
            <person name="Strittmatter S.M."/>
            <person name="De Camilli P."/>
        </authorList>
    </citation>
    <scope>INTERACTION WITH INPP4A; INPP5B AND OCRL</scope>
</reference>
<reference key="17">
    <citation type="journal article" date="2015" name="J. Neurosci.">
        <title>Gene-silencing screen for mammalian axon regeneration identifies Inpp5f (Sac2) as an endogenous suppressor of repair after spinal cord injury.</title>
        <authorList>
            <person name="Zou Y."/>
            <person name="Stagi M."/>
            <person name="Wang X."/>
            <person name="Yigitkanli K."/>
            <person name="Siegel C.S."/>
            <person name="Nakatsu F."/>
            <person name="Cafferty W.B."/>
            <person name="Strittmatter S.M."/>
        </authorList>
    </citation>
    <scope>TISSUE SPECIFICITY</scope>
</reference>
<reference key="18">
    <citation type="journal article" date="2015" name="J. Cell Biol.">
        <title>Spatiotemporal control of phosphatidylinositol 4-phosphate by Sac2 regulates endocytic recycling.</title>
        <authorList>
            <person name="Hsu F."/>
            <person name="Hu F."/>
            <person name="Mao Y."/>
        </authorList>
    </citation>
    <scope>X-RAY CRYSTALLOGRAPHY (2.62 ANGSTROMS) OF 593-760</scope>
    <scope>FUNCTION</scope>
    <scope>SUBUNIT</scope>
    <scope>SUBCELLULAR LOCATION</scope>
    <scope>MUTAGENESIS OF CYS-458</scope>
</reference>
<evidence type="ECO:0000250" key="1">
    <source>
        <dbReference type="UniProtKB" id="Q8CDA1"/>
    </source>
</evidence>
<evidence type="ECO:0000255" key="2">
    <source>
        <dbReference type="PROSITE-ProRule" id="PRU00183"/>
    </source>
</evidence>
<evidence type="ECO:0000255" key="3">
    <source>
        <dbReference type="PROSITE-ProRule" id="PRU01127"/>
    </source>
</evidence>
<evidence type="ECO:0000256" key="4">
    <source>
        <dbReference type="SAM" id="MobiDB-lite"/>
    </source>
</evidence>
<evidence type="ECO:0000269" key="5">
    <source>
    </source>
</evidence>
<evidence type="ECO:0000269" key="6">
    <source>
    </source>
</evidence>
<evidence type="ECO:0000269" key="7">
    <source>
    </source>
</evidence>
<evidence type="ECO:0000269" key="8">
    <source>
    </source>
</evidence>
<evidence type="ECO:0000269" key="9">
    <source>
    </source>
</evidence>
<evidence type="ECO:0000269" key="10">
    <source>
    </source>
</evidence>
<evidence type="ECO:0000269" key="11">
    <source>
    </source>
</evidence>
<evidence type="ECO:0000269" key="12">
    <source>
    </source>
</evidence>
<evidence type="ECO:0000303" key="13">
    <source>
    </source>
</evidence>
<evidence type="ECO:0000303" key="14">
    <source>
    </source>
</evidence>
<evidence type="ECO:0000305" key="15"/>
<evidence type="ECO:0000305" key="16">
    <source>
    </source>
</evidence>
<evidence type="ECO:0000305" key="17">
    <source>
    </source>
</evidence>
<evidence type="ECO:0000312" key="18">
    <source>
        <dbReference type="HGNC" id="HGNC:17054"/>
    </source>
</evidence>
<evidence type="ECO:0007744" key="19">
    <source>
    </source>
</evidence>
<evidence type="ECO:0007829" key="20">
    <source>
        <dbReference type="PDB" id="4XUU"/>
    </source>
</evidence>
<feature type="chain" id="PRO_0000331621" description="Phosphatidylinositide phosphatase SAC2">
    <location>
        <begin position="1"/>
        <end position="1132"/>
    </location>
</feature>
<feature type="domain" description="SAC" evidence="2">
    <location>
        <begin position="167"/>
        <end position="518"/>
    </location>
</feature>
<feature type="domain" description="hSac2" evidence="3">
    <location>
        <begin position="593"/>
        <end position="760"/>
    </location>
</feature>
<feature type="region of interest" description="Disordered" evidence="4">
    <location>
        <begin position="846"/>
        <end position="875"/>
    </location>
</feature>
<feature type="region of interest" description="Disordered" evidence="4">
    <location>
        <begin position="923"/>
        <end position="942"/>
    </location>
</feature>
<feature type="region of interest" description="Disordered" evidence="4">
    <location>
        <begin position="974"/>
        <end position="1017"/>
    </location>
</feature>
<feature type="compositionally biased region" description="Basic and acidic residues" evidence="4">
    <location>
        <begin position="856"/>
        <end position="874"/>
    </location>
</feature>
<feature type="modified residue" description="Phosphoserine" evidence="1">
    <location>
        <position position="827"/>
    </location>
</feature>
<feature type="modified residue" description="Phosphoserine" evidence="1">
    <location>
        <position position="830"/>
    </location>
</feature>
<feature type="modified residue" description="Phosphoserine" evidence="1">
    <location>
        <position position="878"/>
    </location>
</feature>
<feature type="modified residue" description="Phosphoserine" evidence="1">
    <location>
        <position position="881"/>
    </location>
</feature>
<feature type="modified residue" description="Phosphoserine" evidence="19">
    <location>
        <position position="907"/>
    </location>
</feature>
<feature type="modified residue" description="Phosphoserine" evidence="1">
    <location>
        <position position="910"/>
    </location>
</feature>
<feature type="modified residue" description="Phosphoserine" evidence="19">
    <location>
        <position position="1103"/>
    </location>
</feature>
<feature type="splice variant" id="VSP_046366" description="In isoform 4." evidence="13">
    <original>MELFQAKDHYILQQGERAL</original>
    <variation>MCHDVIFMAWLKQQFSECT</variation>
    <location>
        <begin position="1"/>
        <end position="19"/>
    </location>
</feature>
<feature type="splice variant" id="VSP_046367" description="In isoform 4." evidence="13">
    <location>
        <begin position="20"/>
        <end position="629"/>
    </location>
</feature>
<feature type="splice variant" id="VSP_033266" description="In isoform 3." evidence="14">
    <original>DDRFFWNKYMIQDL</original>
    <variation>PLTARRAGFALGKK</variation>
    <location>
        <begin position="206"/>
        <end position="219"/>
    </location>
</feature>
<feature type="splice variant" id="VSP_033267" description="In isoform 3." evidence="14">
    <location>
        <begin position="220"/>
        <end position="1132"/>
    </location>
</feature>
<feature type="splice variant" id="VSP_033268" description="In isoform 2." evidence="14">
    <original>VII</original>
    <variation>QQK</variation>
    <location>
        <begin position="373"/>
        <end position="375"/>
    </location>
</feature>
<feature type="splice variant" id="VSP_033269" description="In isoform 2." evidence="14">
    <location>
        <begin position="376"/>
        <end position="1132"/>
    </location>
</feature>
<feature type="sequence variant" id="VAR_042907" description="In dbSNP:rs3736822.">
    <original>I</original>
    <variation>V</variation>
    <location>
        <position position="453"/>
    </location>
</feature>
<feature type="sequence variant" id="VAR_042908" description="In dbSNP:rs3188055." evidence="5 7">
    <original>N</original>
    <variation>D</variation>
    <location>
        <position position="997"/>
    </location>
</feature>
<feature type="mutagenesis site" description="Loss of inositol 4-phosphatase activity. Alters TFRC distribution and delays TF recycling." evidence="11">
    <original>C</original>
    <variation>S</variation>
    <location>
        <position position="458"/>
    </location>
</feature>
<feature type="sequence conflict" description="In Ref. 6; AAI11494." evidence="15" ref="6">
    <original>I</original>
    <variation>V</variation>
    <location>
        <position position="386"/>
    </location>
</feature>
<feature type="sequence conflict" description="In Ref. 3; BAG52363." evidence="15" ref="3">
    <original>Y</original>
    <variation>N</variation>
    <location>
        <position position="654"/>
    </location>
</feature>
<feature type="sequence conflict" description="In Ref. 3; BAG52363." evidence="15" ref="3">
    <original>P</original>
    <variation>L</variation>
    <location>
        <position position="1008"/>
    </location>
</feature>
<feature type="sequence conflict" description="In Ref. 3; BAG52363." evidence="15" ref="3">
    <original>S</original>
    <variation>P</variation>
    <location>
        <position position="1019"/>
    </location>
</feature>
<feature type="helix" evidence="20">
    <location>
        <begin position="595"/>
        <end position="610"/>
    </location>
</feature>
<feature type="strand" evidence="20">
    <location>
        <begin position="617"/>
        <end position="625"/>
    </location>
</feature>
<feature type="strand" evidence="20">
    <location>
        <begin position="639"/>
        <end position="654"/>
    </location>
</feature>
<feature type="strand" evidence="20">
    <location>
        <begin position="656"/>
        <end position="668"/>
    </location>
</feature>
<feature type="helix" evidence="20">
    <location>
        <begin position="669"/>
        <end position="671"/>
    </location>
</feature>
<feature type="strand" evidence="20">
    <location>
        <begin position="672"/>
        <end position="679"/>
    </location>
</feature>
<feature type="strand" evidence="20">
    <location>
        <begin position="683"/>
        <end position="685"/>
    </location>
</feature>
<feature type="strand" evidence="20">
    <location>
        <begin position="689"/>
        <end position="698"/>
    </location>
</feature>
<feature type="strand" evidence="20">
    <location>
        <begin position="701"/>
        <end position="710"/>
    </location>
</feature>
<feature type="helix" evidence="20">
    <location>
        <begin position="720"/>
        <end position="736"/>
    </location>
</feature>
<feature type="strand" evidence="20">
    <location>
        <begin position="743"/>
        <end position="746"/>
    </location>
</feature>
<accession>Q9Y2H2</accession>
<accession>B3KRF1</accession>
<accession>D3DRD1</accession>
<accession>Q2T9J4</accession>
<accession>Q5W135</accession>
<accession>Q5W136</accession>
<accession>Q6NVY2</accession>
<accession>Q86U97</accession>
<accession>Q9H3D9</accession>
<accession>Q9NT51</accession>
<organism>
    <name type="scientific">Homo sapiens</name>
    <name type="common">Human</name>
    <dbReference type="NCBI Taxonomy" id="9606"/>
    <lineage>
        <taxon>Eukaryota</taxon>
        <taxon>Metazoa</taxon>
        <taxon>Chordata</taxon>
        <taxon>Craniata</taxon>
        <taxon>Vertebrata</taxon>
        <taxon>Euteleostomi</taxon>
        <taxon>Mammalia</taxon>
        <taxon>Eutheria</taxon>
        <taxon>Euarchontoglires</taxon>
        <taxon>Primates</taxon>
        <taxon>Haplorrhini</taxon>
        <taxon>Catarrhini</taxon>
        <taxon>Hominidae</taxon>
        <taxon>Homo</taxon>
    </lineage>
</organism>
<name>SAC2_HUMAN</name>